<keyword id="KW-0687">Ribonucleoprotein</keyword>
<keyword id="KW-0689">Ribosomal protein</keyword>
<keyword id="KW-0694">RNA-binding</keyword>
<keyword id="KW-0699">rRNA-binding</keyword>
<keyword id="KW-0820">tRNA-binding</keyword>
<accession>Q39KG0</accession>
<organism>
    <name type="scientific">Burkholderia lata (strain ATCC 17760 / DSM 23089 / LMG 22485 / NCIMB 9086 / R18194 / 383)</name>
    <dbReference type="NCBI Taxonomy" id="482957"/>
    <lineage>
        <taxon>Bacteria</taxon>
        <taxon>Pseudomonadati</taxon>
        <taxon>Pseudomonadota</taxon>
        <taxon>Betaproteobacteria</taxon>
        <taxon>Burkholderiales</taxon>
        <taxon>Burkholderiaceae</taxon>
        <taxon>Burkholderia</taxon>
        <taxon>Burkholderia cepacia complex</taxon>
    </lineage>
</organism>
<feature type="chain" id="PRO_0000251622" description="Large ribosomal subunit protein uL16">
    <location>
        <begin position="1"/>
        <end position="138"/>
    </location>
</feature>
<feature type="region of interest" description="Disordered" evidence="2">
    <location>
        <begin position="1"/>
        <end position="24"/>
    </location>
</feature>
<feature type="compositionally biased region" description="Basic residues" evidence="2">
    <location>
        <begin position="1"/>
        <end position="13"/>
    </location>
</feature>
<gene>
    <name evidence="1" type="primary">rplP</name>
    <name type="ordered locus">Bcep18194_A3454</name>
</gene>
<protein>
    <recommendedName>
        <fullName evidence="1">Large ribosomal subunit protein uL16</fullName>
    </recommendedName>
    <alternativeName>
        <fullName evidence="3">50S ribosomal protein L16</fullName>
    </alternativeName>
</protein>
<proteinExistence type="inferred from homology"/>
<sequence>MLQPKRRKYRKEQKGRNTGKATRGNAVSFGEFGLKAIGRGRLTARQIEAARRAMTRHIKRGGRIWIRIFPDKPISQKPAEVRMGNGKGNPEYYVAEIQPGKMLYEMDGVTEELAREAFRLAAAKLPLKTAFIVRQLGA</sequence>
<dbReference type="EMBL" id="CP000151">
    <property type="protein sequence ID" value="ABB07056.1"/>
    <property type="molecule type" value="Genomic_DNA"/>
</dbReference>
<dbReference type="RefSeq" id="WP_006482873.1">
    <property type="nucleotide sequence ID" value="NZ_WNDV01000034.1"/>
</dbReference>
<dbReference type="SMR" id="Q39KG0"/>
<dbReference type="GeneID" id="93193444"/>
<dbReference type="KEGG" id="bur:Bcep18194_A3454"/>
<dbReference type="HOGENOM" id="CLU_078858_2_1_4"/>
<dbReference type="Proteomes" id="UP000002705">
    <property type="component" value="Chromosome 1"/>
</dbReference>
<dbReference type="GO" id="GO:0022625">
    <property type="term" value="C:cytosolic large ribosomal subunit"/>
    <property type="evidence" value="ECO:0007669"/>
    <property type="project" value="TreeGrafter"/>
</dbReference>
<dbReference type="GO" id="GO:0019843">
    <property type="term" value="F:rRNA binding"/>
    <property type="evidence" value="ECO:0007669"/>
    <property type="project" value="UniProtKB-UniRule"/>
</dbReference>
<dbReference type="GO" id="GO:0003735">
    <property type="term" value="F:structural constituent of ribosome"/>
    <property type="evidence" value="ECO:0007669"/>
    <property type="project" value="InterPro"/>
</dbReference>
<dbReference type="GO" id="GO:0000049">
    <property type="term" value="F:tRNA binding"/>
    <property type="evidence" value="ECO:0007669"/>
    <property type="project" value="UniProtKB-KW"/>
</dbReference>
<dbReference type="GO" id="GO:0006412">
    <property type="term" value="P:translation"/>
    <property type="evidence" value="ECO:0007669"/>
    <property type="project" value="UniProtKB-UniRule"/>
</dbReference>
<dbReference type="CDD" id="cd01433">
    <property type="entry name" value="Ribosomal_L16_L10e"/>
    <property type="match status" value="1"/>
</dbReference>
<dbReference type="FunFam" id="3.90.1170.10:FF:000001">
    <property type="entry name" value="50S ribosomal protein L16"/>
    <property type="match status" value="1"/>
</dbReference>
<dbReference type="Gene3D" id="3.90.1170.10">
    <property type="entry name" value="Ribosomal protein L10e/L16"/>
    <property type="match status" value="1"/>
</dbReference>
<dbReference type="HAMAP" id="MF_01342">
    <property type="entry name" value="Ribosomal_uL16"/>
    <property type="match status" value="1"/>
</dbReference>
<dbReference type="InterPro" id="IPR047873">
    <property type="entry name" value="Ribosomal_uL16"/>
</dbReference>
<dbReference type="InterPro" id="IPR000114">
    <property type="entry name" value="Ribosomal_uL16_bact-type"/>
</dbReference>
<dbReference type="InterPro" id="IPR020798">
    <property type="entry name" value="Ribosomal_uL16_CS"/>
</dbReference>
<dbReference type="InterPro" id="IPR016180">
    <property type="entry name" value="Ribosomal_uL16_dom"/>
</dbReference>
<dbReference type="InterPro" id="IPR036920">
    <property type="entry name" value="Ribosomal_uL16_sf"/>
</dbReference>
<dbReference type="NCBIfam" id="TIGR01164">
    <property type="entry name" value="rplP_bact"/>
    <property type="match status" value="1"/>
</dbReference>
<dbReference type="PANTHER" id="PTHR12220">
    <property type="entry name" value="50S/60S RIBOSOMAL PROTEIN L16"/>
    <property type="match status" value="1"/>
</dbReference>
<dbReference type="PANTHER" id="PTHR12220:SF13">
    <property type="entry name" value="LARGE RIBOSOMAL SUBUNIT PROTEIN UL16M"/>
    <property type="match status" value="1"/>
</dbReference>
<dbReference type="Pfam" id="PF00252">
    <property type="entry name" value="Ribosomal_L16"/>
    <property type="match status" value="1"/>
</dbReference>
<dbReference type="PRINTS" id="PR00060">
    <property type="entry name" value="RIBOSOMALL16"/>
</dbReference>
<dbReference type="SUPFAM" id="SSF54686">
    <property type="entry name" value="Ribosomal protein L16p/L10e"/>
    <property type="match status" value="1"/>
</dbReference>
<dbReference type="PROSITE" id="PS00586">
    <property type="entry name" value="RIBOSOMAL_L16_1"/>
    <property type="match status" value="1"/>
</dbReference>
<comment type="function">
    <text evidence="1">Binds 23S rRNA and is also seen to make contacts with the A and possibly P site tRNAs.</text>
</comment>
<comment type="subunit">
    <text evidence="1">Part of the 50S ribosomal subunit.</text>
</comment>
<comment type="similarity">
    <text evidence="1">Belongs to the universal ribosomal protein uL16 family.</text>
</comment>
<reference key="1">
    <citation type="submission" date="2005-10" db="EMBL/GenBank/DDBJ databases">
        <title>Complete sequence of chromosome 1 of Burkholderia sp. 383.</title>
        <authorList>
            <consortium name="US DOE Joint Genome Institute"/>
            <person name="Copeland A."/>
            <person name="Lucas S."/>
            <person name="Lapidus A."/>
            <person name="Barry K."/>
            <person name="Detter J.C."/>
            <person name="Glavina T."/>
            <person name="Hammon N."/>
            <person name="Israni S."/>
            <person name="Pitluck S."/>
            <person name="Chain P."/>
            <person name="Malfatti S."/>
            <person name="Shin M."/>
            <person name="Vergez L."/>
            <person name="Schmutz J."/>
            <person name="Larimer F."/>
            <person name="Land M."/>
            <person name="Kyrpides N."/>
            <person name="Lykidis A."/>
            <person name="Richardson P."/>
        </authorList>
    </citation>
    <scope>NUCLEOTIDE SEQUENCE [LARGE SCALE GENOMIC DNA]</scope>
    <source>
        <strain>ATCC 17760 / DSM 23089 / LMG 22485 / NCIMB 9086 / R18194 / 383</strain>
    </source>
</reference>
<name>RL16_BURL3</name>
<evidence type="ECO:0000255" key="1">
    <source>
        <dbReference type="HAMAP-Rule" id="MF_01342"/>
    </source>
</evidence>
<evidence type="ECO:0000256" key="2">
    <source>
        <dbReference type="SAM" id="MobiDB-lite"/>
    </source>
</evidence>
<evidence type="ECO:0000305" key="3"/>